<organism>
    <name type="scientific">Escherichia coli (strain K12 / MC4100 / BW2952)</name>
    <dbReference type="NCBI Taxonomy" id="595496"/>
    <lineage>
        <taxon>Bacteria</taxon>
        <taxon>Pseudomonadati</taxon>
        <taxon>Pseudomonadota</taxon>
        <taxon>Gammaproteobacteria</taxon>
        <taxon>Enterobacterales</taxon>
        <taxon>Enterobacteriaceae</taxon>
        <taxon>Escherichia</taxon>
    </lineage>
</organism>
<accession>C4ZTY0</accession>
<proteinExistence type="inferred from homology"/>
<comment type="similarity">
    <text evidence="1">Belongs to the UPF0509 family.</text>
</comment>
<evidence type="ECO:0000255" key="1">
    <source>
        <dbReference type="HAMAP-Rule" id="MF_01641"/>
    </source>
</evidence>
<gene>
    <name evidence="1" type="primary">yciZ</name>
    <name type="ordered locus">BWG_1116</name>
</gene>
<dbReference type="EMBL" id="CP001396">
    <property type="protein sequence ID" value="ACR63474.1"/>
    <property type="molecule type" value="Genomic_DNA"/>
</dbReference>
<dbReference type="RefSeq" id="WP_001288368.1">
    <property type="nucleotide sequence ID" value="NC_012759.1"/>
</dbReference>
<dbReference type="SMR" id="C4ZTY0"/>
<dbReference type="GeneID" id="93775408"/>
<dbReference type="KEGG" id="ebw:BWG_1116"/>
<dbReference type="HOGENOM" id="CLU_180697_1_0_6"/>
<dbReference type="HAMAP" id="MF_01641">
    <property type="entry name" value="UPF0509"/>
    <property type="match status" value="1"/>
</dbReference>
<dbReference type="InterPro" id="IPR020887">
    <property type="entry name" value="UPF0509"/>
</dbReference>
<dbReference type="NCBIfam" id="NF010179">
    <property type="entry name" value="PRK13658.1"/>
    <property type="match status" value="1"/>
</dbReference>
<dbReference type="Pfam" id="PF23675">
    <property type="entry name" value="YciZ"/>
    <property type="match status" value="1"/>
</dbReference>
<protein>
    <recommendedName>
        <fullName evidence="1">UPF0509 protein YciZ</fullName>
    </recommendedName>
</protein>
<name>YCIZ_ECOBW</name>
<sequence>MSEFDAQRVAERIDIVLDILVAGDYHSAIHNLEILKAELLRQVAESTPDIPKAPWEI</sequence>
<feature type="chain" id="PRO_1000215827" description="UPF0509 protein YciZ">
    <location>
        <begin position="1"/>
        <end position="57"/>
    </location>
</feature>
<reference key="1">
    <citation type="journal article" date="2009" name="J. Bacteriol.">
        <title>Genomic sequencing reveals regulatory mutations and recombinational events in the widely used MC4100 lineage of Escherichia coli K-12.</title>
        <authorList>
            <person name="Ferenci T."/>
            <person name="Zhou Z."/>
            <person name="Betteridge T."/>
            <person name="Ren Y."/>
            <person name="Liu Y."/>
            <person name="Feng L."/>
            <person name="Reeves P.R."/>
            <person name="Wang L."/>
        </authorList>
    </citation>
    <scope>NUCLEOTIDE SEQUENCE [LARGE SCALE GENOMIC DNA]</scope>
    <source>
        <strain>K12 / MC4100 / BW2952</strain>
    </source>
</reference>